<dbReference type="EMBL" id="AF450267">
    <property type="protein sequence ID" value="AAL49726.1"/>
    <property type="status" value="ALT_INIT"/>
    <property type="molecule type" value="mRNA"/>
</dbReference>
<dbReference type="EMBL" id="AC009955">
    <property type="status" value="NOT_ANNOTATED_CDS"/>
    <property type="molecule type" value="Genomic_DNA"/>
</dbReference>
<dbReference type="EMBL" id="BC014114">
    <property type="protein sequence ID" value="AAH14114.2"/>
    <property type="molecule type" value="mRNA"/>
</dbReference>
<dbReference type="EMBL" id="BC034051">
    <property type="protein sequence ID" value="AAH34051.1"/>
    <property type="status" value="ALT_INIT"/>
    <property type="molecule type" value="mRNA"/>
</dbReference>
<dbReference type="EMBL" id="AB067485">
    <property type="protein sequence ID" value="BAB67791.1"/>
    <property type="molecule type" value="mRNA"/>
</dbReference>
<dbReference type="CCDS" id="CCDS46521.2"/>
<dbReference type="RefSeq" id="NP_443134.3">
    <property type="nucleotide sequence ID" value="NM_052902.4"/>
</dbReference>
<dbReference type="BioGRID" id="125352">
    <property type="interactions" value="93"/>
</dbReference>
<dbReference type="FunCoup" id="Q8N1F8">
    <property type="interactions" value="2356"/>
</dbReference>
<dbReference type="IntAct" id="Q8N1F8">
    <property type="interactions" value="38"/>
</dbReference>
<dbReference type="MINT" id="Q8N1F8"/>
<dbReference type="STRING" id="9606.ENSP00000389383"/>
<dbReference type="GlyGen" id="Q8N1F8">
    <property type="glycosylation" value="3 sites, 1 O-linked glycan (1 site)"/>
</dbReference>
<dbReference type="iPTMnet" id="Q8N1F8"/>
<dbReference type="PhosphoSitePlus" id="Q8N1F8"/>
<dbReference type="SwissPalm" id="Q8N1F8"/>
<dbReference type="BioMuta" id="STK11IP"/>
<dbReference type="DMDM" id="296452972"/>
<dbReference type="jPOST" id="Q8N1F8"/>
<dbReference type="MassIVE" id="Q8N1F8"/>
<dbReference type="PaxDb" id="9606-ENSP00000295641"/>
<dbReference type="PeptideAtlas" id="Q8N1F8"/>
<dbReference type="ProteomicsDB" id="11298"/>
<dbReference type="Pumba" id="Q8N1F8"/>
<dbReference type="Antibodypedia" id="34344">
    <property type="antibodies" value="140 antibodies from 26 providers"/>
</dbReference>
<dbReference type="DNASU" id="114790"/>
<dbReference type="Ensembl" id="ENST00000456909.6">
    <property type="protein sequence ID" value="ENSP00000389383.1"/>
    <property type="gene ID" value="ENSG00000144589.22"/>
</dbReference>
<dbReference type="GeneID" id="114790"/>
<dbReference type="KEGG" id="hsa:114790"/>
<dbReference type="MANE-Select" id="ENST00000456909.6">
    <property type="protein sequence ID" value="ENSP00000389383.1"/>
    <property type="RefSeq nucleotide sequence ID" value="NM_052902.4"/>
    <property type="RefSeq protein sequence ID" value="NP_443134.3"/>
</dbReference>
<dbReference type="UCSC" id="uc002vml.3">
    <property type="organism name" value="human"/>
</dbReference>
<dbReference type="AGR" id="HGNC:19184"/>
<dbReference type="CTD" id="114790"/>
<dbReference type="DisGeNET" id="114790"/>
<dbReference type="GeneCards" id="STK11IP"/>
<dbReference type="HGNC" id="HGNC:19184">
    <property type="gene designation" value="STK11IP"/>
</dbReference>
<dbReference type="HPA" id="ENSG00000144589">
    <property type="expression patterns" value="Low tissue specificity"/>
</dbReference>
<dbReference type="MIM" id="607172">
    <property type="type" value="gene"/>
</dbReference>
<dbReference type="neXtProt" id="NX_Q8N1F8"/>
<dbReference type="OpenTargets" id="ENSG00000144589"/>
<dbReference type="PharmGKB" id="PA38822"/>
<dbReference type="VEuPathDB" id="HostDB:ENSG00000144589"/>
<dbReference type="eggNOG" id="KOG1859">
    <property type="taxonomic scope" value="Eukaryota"/>
</dbReference>
<dbReference type="GeneTree" id="ENSGT00940000158471"/>
<dbReference type="InParanoid" id="Q8N1F8"/>
<dbReference type="OMA" id="MVKFGRQ"/>
<dbReference type="OrthoDB" id="7451790at2759"/>
<dbReference type="PAN-GO" id="Q8N1F8">
    <property type="GO annotations" value="3 GO annotations based on evolutionary models"/>
</dbReference>
<dbReference type="PhylomeDB" id="Q8N1F8"/>
<dbReference type="TreeFam" id="TF326448"/>
<dbReference type="PathwayCommons" id="Q8N1F8"/>
<dbReference type="Reactome" id="R-HSA-6798695">
    <property type="pathway name" value="Neutrophil degranulation"/>
</dbReference>
<dbReference type="SignaLink" id="Q8N1F8"/>
<dbReference type="BioGRID-ORCS" id="114790">
    <property type="hits" value="14 hits in 1067 CRISPR screens"/>
</dbReference>
<dbReference type="GenomeRNAi" id="114790"/>
<dbReference type="Pharos" id="Q8N1F8">
    <property type="development level" value="Tdark"/>
</dbReference>
<dbReference type="PRO" id="PR:Q8N1F8"/>
<dbReference type="Proteomes" id="UP000005640">
    <property type="component" value="Chromosome 2"/>
</dbReference>
<dbReference type="RNAct" id="Q8N1F8">
    <property type="molecule type" value="protein"/>
</dbReference>
<dbReference type="Bgee" id="ENSG00000144589">
    <property type="expression patterns" value="Expressed in right testis and 147 other cell types or tissues"/>
</dbReference>
<dbReference type="ExpressionAtlas" id="Q8N1F8">
    <property type="expression patterns" value="baseline and differential"/>
</dbReference>
<dbReference type="GO" id="GO:0035578">
    <property type="term" value="C:azurophil granule lumen"/>
    <property type="evidence" value="ECO:0000304"/>
    <property type="project" value="Reactome"/>
</dbReference>
<dbReference type="GO" id="GO:0005737">
    <property type="term" value="C:cytoplasm"/>
    <property type="evidence" value="ECO:0000314"/>
    <property type="project" value="UniProtKB"/>
</dbReference>
<dbReference type="GO" id="GO:0005576">
    <property type="term" value="C:extracellular region"/>
    <property type="evidence" value="ECO:0000304"/>
    <property type="project" value="Reactome"/>
</dbReference>
<dbReference type="GO" id="GO:0043231">
    <property type="term" value="C:intracellular membrane-bounded organelle"/>
    <property type="evidence" value="ECO:0000314"/>
    <property type="project" value="HPA"/>
</dbReference>
<dbReference type="GO" id="GO:0005765">
    <property type="term" value="C:lysosomal membrane"/>
    <property type="evidence" value="ECO:0007005"/>
    <property type="project" value="UniProtKB"/>
</dbReference>
<dbReference type="GO" id="GO:0019901">
    <property type="term" value="F:protein kinase binding"/>
    <property type="evidence" value="ECO:0000353"/>
    <property type="project" value="UniProtKB"/>
</dbReference>
<dbReference type="GO" id="GO:0008104">
    <property type="term" value="P:protein localization"/>
    <property type="evidence" value="ECO:0000314"/>
    <property type="project" value="UniProtKB"/>
</dbReference>
<dbReference type="FunFam" id="3.80.10.10:FF:000527">
    <property type="entry name" value="Serine/threonine kinase 11 interacting protein"/>
    <property type="match status" value="1"/>
</dbReference>
<dbReference type="FunFam" id="3.80.10.10:FF:001449">
    <property type="entry name" value="Serine/threonine kinase 11 interacting protein"/>
    <property type="match status" value="1"/>
</dbReference>
<dbReference type="Gene3D" id="3.80.10.10">
    <property type="entry name" value="Ribonuclease Inhibitor"/>
    <property type="match status" value="1"/>
</dbReference>
<dbReference type="InterPro" id="IPR001611">
    <property type="entry name" value="Leu-rich_rpt"/>
</dbReference>
<dbReference type="InterPro" id="IPR031782">
    <property type="entry name" value="LIP1_N"/>
</dbReference>
<dbReference type="InterPro" id="IPR032675">
    <property type="entry name" value="LRR_dom_sf"/>
</dbReference>
<dbReference type="PANTHER" id="PTHR15454">
    <property type="entry name" value="NISCHARIN RELATED"/>
    <property type="match status" value="1"/>
</dbReference>
<dbReference type="PANTHER" id="PTHR15454:SF69">
    <property type="entry name" value="SERINE_THREONINE-PROTEIN KINASE 11-INTERACTING PROTEIN"/>
    <property type="match status" value="1"/>
</dbReference>
<dbReference type="Pfam" id="PF15904">
    <property type="entry name" value="LIP1"/>
    <property type="match status" value="1"/>
</dbReference>
<dbReference type="Pfam" id="PF25357">
    <property type="entry name" value="PH_S11IP"/>
    <property type="match status" value="1"/>
</dbReference>
<dbReference type="SUPFAM" id="SSF52075">
    <property type="entry name" value="Outer arm dynein light chain 1"/>
    <property type="match status" value="1"/>
</dbReference>
<dbReference type="PROSITE" id="PS51450">
    <property type="entry name" value="LRR"/>
    <property type="match status" value="7"/>
</dbReference>
<evidence type="ECO:0000256" key="1">
    <source>
        <dbReference type="SAM" id="MobiDB-lite"/>
    </source>
</evidence>
<evidence type="ECO:0000269" key="2">
    <source>
    </source>
</evidence>
<evidence type="ECO:0000269" key="3">
    <source>
    </source>
</evidence>
<evidence type="ECO:0000269" key="4">
    <source>
    </source>
</evidence>
<evidence type="ECO:0000269" key="5">
    <source>
    </source>
</evidence>
<evidence type="ECO:0000305" key="6"/>
<evidence type="ECO:0007744" key="7">
    <source>
    </source>
</evidence>
<evidence type="ECO:0007744" key="8">
    <source>
    </source>
</evidence>
<evidence type="ECO:0007744" key="9">
    <source>
    </source>
</evidence>
<evidence type="ECO:0007744" key="10">
    <source>
    </source>
</evidence>
<comment type="function">
    <text evidence="3">May regulate STK11/LKB1 function by controlling its subcellular localization.</text>
</comment>
<comment type="subunit">
    <text evidence="3">Found in a ternary complex composed of STK11/LKB1, STK11IP and SMAD4. Interacts with STK11/LKB1 and SMAD4.</text>
</comment>
<comment type="subcellular location">
    <subcellularLocation>
        <location evidence="3">Cytoplasm</location>
    </subcellularLocation>
    <text>Some cells show granular or punctuate expression. Colocalizes with STK11/LKB1 and SMAD4 in granular or punctuate structures.</text>
</comment>
<comment type="similarity">
    <text evidence="6">Belongs to the STK11IP family.</text>
</comment>
<comment type="sequence caution" evidence="6">
    <conflict type="erroneous initiation">
        <sequence resource="EMBL-CDS" id="AAH34051"/>
    </conflict>
    <text>Extended N-terminus.</text>
</comment>
<comment type="sequence caution" evidence="6">
    <conflict type="erroneous initiation">
        <sequence resource="EMBL-CDS" id="AAL49726"/>
    </conflict>
    <text>Extended N-terminus.</text>
</comment>
<feature type="chain" id="PRO_0000317462" description="Serine/threonine-protein kinase 11-interacting protein">
    <location>
        <begin position="1"/>
        <end position="1088"/>
    </location>
</feature>
<feature type="repeat" description="LRR 1">
    <location>
        <begin position="109"/>
        <end position="130"/>
    </location>
</feature>
<feature type="repeat" description="LRR 2">
    <location>
        <begin position="132"/>
        <end position="152"/>
    </location>
</feature>
<feature type="repeat" description="LRR 3">
    <location>
        <begin position="164"/>
        <end position="185"/>
    </location>
</feature>
<feature type="repeat" description="LRR 4">
    <location>
        <begin position="187"/>
        <end position="209"/>
    </location>
</feature>
<feature type="repeat" description="LRR 5">
    <location>
        <begin position="210"/>
        <end position="231"/>
    </location>
</feature>
<feature type="repeat" description="LRR 6">
    <location>
        <begin position="233"/>
        <end position="254"/>
    </location>
</feature>
<feature type="repeat" description="LRR 7">
    <location>
        <begin position="255"/>
        <end position="276"/>
    </location>
</feature>
<feature type="repeat" description="LRR 8">
    <location>
        <begin position="280"/>
        <end position="301"/>
    </location>
</feature>
<feature type="region of interest" description="Disordered" evidence="1">
    <location>
        <begin position="335"/>
        <end position="407"/>
    </location>
</feature>
<feature type="region of interest" description="Disordered" evidence="1">
    <location>
        <begin position="437"/>
        <end position="533"/>
    </location>
</feature>
<feature type="region of interest" description="Disordered" evidence="1">
    <location>
        <begin position="724"/>
        <end position="780"/>
    </location>
</feature>
<feature type="region of interest" description="Disordered" evidence="1">
    <location>
        <begin position="978"/>
        <end position="1009"/>
    </location>
</feature>
<feature type="compositionally biased region" description="Low complexity" evidence="1">
    <location>
        <begin position="346"/>
        <end position="367"/>
    </location>
</feature>
<feature type="compositionally biased region" description="Basic residues" evidence="1">
    <location>
        <begin position="375"/>
        <end position="385"/>
    </location>
</feature>
<feature type="compositionally biased region" description="Low complexity" evidence="1">
    <location>
        <begin position="447"/>
        <end position="460"/>
    </location>
</feature>
<feature type="compositionally biased region" description="Acidic residues" evidence="1">
    <location>
        <begin position="508"/>
        <end position="529"/>
    </location>
</feature>
<feature type="compositionally biased region" description="Polar residues" evidence="1">
    <location>
        <begin position="733"/>
        <end position="742"/>
    </location>
</feature>
<feature type="compositionally biased region" description="Basic and acidic residues" evidence="1">
    <location>
        <begin position="750"/>
        <end position="759"/>
    </location>
</feature>
<feature type="compositionally biased region" description="Low complexity" evidence="1">
    <location>
        <begin position="978"/>
        <end position="994"/>
    </location>
</feature>
<feature type="modified residue" description="Phosphoserine" evidence="7 8 9">
    <location>
        <position position="387"/>
    </location>
</feature>
<feature type="modified residue" description="Phosphoserine" evidence="7">
    <location>
        <position position="389"/>
    </location>
</feature>
<feature type="modified residue" description="Phosphoserine" evidence="7">
    <location>
        <position position="392"/>
    </location>
</feature>
<feature type="modified residue" description="Phosphoserine" evidence="10">
    <location>
        <position position="470"/>
    </location>
</feature>
<feature type="modified residue" description="Phosphoserine" evidence="9">
    <location>
        <position position="599"/>
    </location>
</feature>
<feature type="modified residue" description="Phosphoserine" evidence="7 9 10">
    <location>
        <position position="761"/>
    </location>
</feature>
<feature type="modified residue" description="Phosphoserine" evidence="9">
    <location>
        <position position="773"/>
    </location>
</feature>
<feature type="modified residue" description="Phosphoserine" evidence="9">
    <location>
        <position position="777"/>
    </location>
</feature>
<feature type="sequence variant" id="VAR_038529" description="In dbSNP:rs17855575." evidence="5">
    <original>R</original>
    <variation>H</variation>
    <location>
        <position position="382"/>
    </location>
</feature>
<feature type="sequence variant" id="VAR_038530" description="In dbSNP:rs17855576." evidence="5">
    <original>R</original>
    <variation>G</variation>
    <location>
        <position position="399"/>
    </location>
</feature>
<feature type="sequence variant" id="VAR_038531" description="In dbSNP:rs673951." evidence="4 5">
    <original>V</original>
    <variation>I</variation>
    <location>
        <position position="552"/>
    </location>
</feature>
<feature type="sequence variant" id="VAR_038532" description="In dbSNP:rs627530." evidence="2 3 5">
    <original>S</original>
    <variation>F</variation>
    <location>
        <position position="741"/>
    </location>
</feature>
<feature type="sequence variant" id="VAR_038533" description="In dbSNP:rs17853279." evidence="5">
    <original>I</original>
    <variation>V</variation>
    <location>
        <position position="1074"/>
    </location>
</feature>
<feature type="sequence conflict" description="In Ref. 1; AAL49726." evidence="6" ref="1">
    <original>S</original>
    <variation>N</variation>
    <location>
        <position position="337"/>
    </location>
</feature>
<protein>
    <recommendedName>
        <fullName>Serine/threonine-protein kinase 11-interacting protein</fullName>
    </recommendedName>
    <alternativeName>
        <fullName>LKB1-interacting protein 1</fullName>
    </alternativeName>
</protein>
<reference key="1">
    <citation type="journal article" date="2001" name="Hum. Mol. Genet.">
        <title>LIP1, a cytoplasmic protein functionally linked to the Peutz-Jeghers syndrome kinase LKB1.</title>
        <authorList>
            <person name="Smith D.P."/>
            <person name="Rayter S.I."/>
            <person name="Niederlander C."/>
            <person name="Spicer J."/>
            <person name="Jones C.M."/>
            <person name="Ashworth A."/>
        </authorList>
    </citation>
    <scope>NUCLEOTIDE SEQUENCE [MRNA]</scope>
    <scope>FUNCTION</scope>
    <scope>IDENTIFICATION IN A TERNARY COMPLEX COMPOSED OF STK11/LKB1 AND SMAD4</scope>
    <scope>INTERACTION WITH STK11/LKB1 AND SMAD4</scope>
    <scope>PHOSPHORYLATION</scope>
    <scope>SUBCELLULAR LOCATION</scope>
    <scope>VARIANT PHE-741</scope>
</reference>
<reference key="2">
    <citation type="journal article" date="2005" name="Nature">
        <title>Generation and annotation of the DNA sequences of human chromosomes 2 and 4.</title>
        <authorList>
            <person name="Hillier L.W."/>
            <person name="Graves T.A."/>
            <person name="Fulton R.S."/>
            <person name="Fulton L.A."/>
            <person name="Pepin K.H."/>
            <person name="Minx P."/>
            <person name="Wagner-McPherson C."/>
            <person name="Layman D."/>
            <person name="Wylie K."/>
            <person name="Sekhon M."/>
            <person name="Becker M.C."/>
            <person name="Fewell G.A."/>
            <person name="Delehaunty K.D."/>
            <person name="Miner T.L."/>
            <person name="Nash W.E."/>
            <person name="Kremitzki C."/>
            <person name="Oddy L."/>
            <person name="Du H."/>
            <person name="Sun H."/>
            <person name="Bradshaw-Cordum H."/>
            <person name="Ali J."/>
            <person name="Carter J."/>
            <person name="Cordes M."/>
            <person name="Harris A."/>
            <person name="Isak A."/>
            <person name="van Brunt A."/>
            <person name="Nguyen C."/>
            <person name="Du F."/>
            <person name="Courtney L."/>
            <person name="Kalicki J."/>
            <person name="Ozersky P."/>
            <person name="Abbott S."/>
            <person name="Armstrong J."/>
            <person name="Belter E.A."/>
            <person name="Caruso L."/>
            <person name="Cedroni M."/>
            <person name="Cotton M."/>
            <person name="Davidson T."/>
            <person name="Desai A."/>
            <person name="Elliott G."/>
            <person name="Erb T."/>
            <person name="Fronick C."/>
            <person name="Gaige T."/>
            <person name="Haakenson W."/>
            <person name="Haglund K."/>
            <person name="Holmes A."/>
            <person name="Harkins R."/>
            <person name="Kim K."/>
            <person name="Kruchowski S.S."/>
            <person name="Strong C.M."/>
            <person name="Grewal N."/>
            <person name="Goyea E."/>
            <person name="Hou S."/>
            <person name="Levy A."/>
            <person name="Martinka S."/>
            <person name="Mead K."/>
            <person name="McLellan M.D."/>
            <person name="Meyer R."/>
            <person name="Randall-Maher J."/>
            <person name="Tomlinson C."/>
            <person name="Dauphin-Kohlberg S."/>
            <person name="Kozlowicz-Reilly A."/>
            <person name="Shah N."/>
            <person name="Swearengen-Shahid S."/>
            <person name="Snider J."/>
            <person name="Strong J.T."/>
            <person name="Thompson J."/>
            <person name="Yoakum M."/>
            <person name="Leonard S."/>
            <person name="Pearman C."/>
            <person name="Trani L."/>
            <person name="Radionenko M."/>
            <person name="Waligorski J.E."/>
            <person name="Wang C."/>
            <person name="Rock S.M."/>
            <person name="Tin-Wollam A.-M."/>
            <person name="Maupin R."/>
            <person name="Latreille P."/>
            <person name="Wendl M.C."/>
            <person name="Yang S.-P."/>
            <person name="Pohl C."/>
            <person name="Wallis J.W."/>
            <person name="Spieth J."/>
            <person name="Bieri T.A."/>
            <person name="Berkowicz N."/>
            <person name="Nelson J.O."/>
            <person name="Osborne J."/>
            <person name="Ding L."/>
            <person name="Meyer R."/>
            <person name="Sabo A."/>
            <person name="Shotland Y."/>
            <person name="Sinha P."/>
            <person name="Wohldmann P.E."/>
            <person name="Cook L.L."/>
            <person name="Hickenbotham M.T."/>
            <person name="Eldred J."/>
            <person name="Williams D."/>
            <person name="Jones T.A."/>
            <person name="She X."/>
            <person name="Ciccarelli F.D."/>
            <person name="Izaurralde E."/>
            <person name="Taylor J."/>
            <person name="Schmutz J."/>
            <person name="Myers R.M."/>
            <person name="Cox D.R."/>
            <person name="Huang X."/>
            <person name="McPherson J.D."/>
            <person name="Mardis E.R."/>
            <person name="Clifton S.W."/>
            <person name="Warren W.C."/>
            <person name="Chinwalla A.T."/>
            <person name="Eddy S.R."/>
            <person name="Marra M.A."/>
            <person name="Ovcharenko I."/>
            <person name="Furey T.S."/>
            <person name="Miller W."/>
            <person name="Eichler E.E."/>
            <person name="Bork P."/>
            <person name="Suyama M."/>
            <person name="Torrents D."/>
            <person name="Waterston R.H."/>
            <person name="Wilson R.K."/>
        </authorList>
    </citation>
    <scope>NUCLEOTIDE SEQUENCE [LARGE SCALE GENOMIC DNA]</scope>
</reference>
<reference key="3">
    <citation type="journal article" date="2004" name="Genome Res.">
        <title>The status, quality, and expansion of the NIH full-length cDNA project: the Mammalian Gene Collection (MGC).</title>
        <authorList>
            <consortium name="The MGC Project Team"/>
        </authorList>
    </citation>
    <scope>NUCLEOTIDE SEQUENCE [LARGE SCALE MRNA]</scope>
    <scope>VARIANTS HIS-382; GLY-399; ILE-552; PHE-741 AND VAL-1074</scope>
    <source>
        <tissue>Brain</tissue>
        <tissue>Carcinoma</tissue>
    </source>
</reference>
<reference key="4">
    <citation type="journal article" date="2001" name="DNA Res.">
        <title>Prediction of the coding sequences of unidentified human genes. XXI. The complete sequences of 60 new cDNA clones from brain which code for large proteins.</title>
        <authorList>
            <person name="Nagase T."/>
            <person name="Kikuno R."/>
            <person name="Ohara O."/>
        </authorList>
    </citation>
    <scope>NUCLEOTIDE SEQUENCE [LARGE SCALE MRNA] OF 76-1088</scope>
    <scope>VARIANT PHE-741</scope>
    <source>
        <tissue>Brain</tissue>
    </source>
</reference>
<reference key="5">
    <citation type="journal article" date="2008" name="Proc. Natl. Acad. Sci. U.S.A.">
        <title>A quantitative atlas of mitotic phosphorylation.</title>
        <authorList>
            <person name="Dephoure N."/>
            <person name="Zhou C."/>
            <person name="Villen J."/>
            <person name="Beausoleil S.A."/>
            <person name="Bakalarski C.E."/>
            <person name="Elledge S.J."/>
            <person name="Gygi S.P."/>
        </authorList>
    </citation>
    <scope>PHOSPHORYLATION [LARGE SCALE ANALYSIS] AT SER-387; SER-389; SER-392 AND SER-761</scope>
    <scope>IDENTIFICATION BY MASS SPECTROMETRY [LARGE SCALE ANALYSIS]</scope>
    <source>
        <tissue>Cervix carcinoma</tissue>
    </source>
</reference>
<reference key="6">
    <citation type="journal article" date="2009" name="Mol. Cell. Proteomics">
        <title>Large-scale proteomics analysis of the human kinome.</title>
        <authorList>
            <person name="Oppermann F.S."/>
            <person name="Gnad F."/>
            <person name="Olsen J.V."/>
            <person name="Hornberger R."/>
            <person name="Greff Z."/>
            <person name="Keri G."/>
            <person name="Mann M."/>
            <person name="Daub H."/>
        </authorList>
    </citation>
    <scope>IDENTIFICATION BY MASS SPECTROMETRY [LARGE SCALE ANALYSIS]</scope>
</reference>
<reference key="7">
    <citation type="journal article" date="2009" name="Sci. Signal.">
        <title>Quantitative phosphoproteomic analysis of T cell receptor signaling reveals system-wide modulation of protein-protein interactions.</title>
        <authorList>
            <person name="Mayya V."/>
            <person name="Lundgren D.H."/>
            <person name="Hwang S.-I."/>
            <person name="Rezaul K."/>
            <person name="Wu L."/>
            <person name="Eng J.K."/>
            <person name="Rodionov V."/>
            <person name="Han D.K."/>
        </authorList>
    </citation>
    <scope>PHOSPHORYLATION [LARGE SCALE ANALYSIS] AT SER-387</scope>
    <scope>IDENTIFICATION BY MASS SPECTROMETRY [LARGE SCALE ANALYSIS]</scope>
    <source>
        <tissue>Leukemic T-cell</tissue>
    </source>
</reference>
<reference key="8">
    <citation type="journal article" date="2010" name="Sci. Signal.">
        <title>Quantitative phosphoproteomics reveals widespread full phosphorylation site occupancy during mitosis.</title>
        <authorList>
            <person name="Olsen J.V."/>
            <person name="Vermeulen M."/>
            <person name="Santamaria A."/>
            <person name="Kumar C."/>
            <person name="Miller M.L."/>
            <person name="Jensen L.J."/>
            <person name="Gnad F."/>
            <person name="Cox J."/>
            <person name="Jensen T.S."/>
            <person name="Nigg E.A."/>
            <person name="Brunak S."/>
            <person name="Mann M."/>
        </authorList>
    </citation>
    <scope>IDENTIFICATION BY MASS SPECTROMETRY [LARGE SCALE ANALYSIS]</scope>
    <source>
        <tissue>Cervix carcinoma</tissue>
    </source>
</reference>
<reference key="9">
    <citation type="journal article" date="2013" name="J. Proteome Res.">
        <title>Toward a comprehensive characterization of a human cancer cell phosphoproteome.</title>
        <authorList>
            <person name="Zhou H."/>
            <person name="Di Palma S."/>
            <person name="Preisinger C."/>
            <person name="Peng M."/>
            <person name="Polat A.N."/>
            <person name="Heck A.J."/>
            <person name="Mohammed S."/>
        </authorList>
    </citation>
    <scope>PHOSPHORYLATION [LARGE SCALE ANALYSIS] AT SER-387; SER-599; SER-761; SER-773 AND SER-777</scope>
    <scope>IDENTIFICATION BY MASS SPECTROMETRY [LARGE SCALE ANALYSIS]</scope>
    <source>
        <tissue>Cervix carcinoma</tissue>
        <tissue>Erythroleukemia</tissue>
    </source>
</reference>
<reference key="10">
    <citation type="journal article" date="2014" name="J. Proteomics">
        <title>An enzyme assisted RP-RPLC approach for in-depth analysis of human liver phosphoproteome.</title>
        <authorList>
            <person name="Bian Y."/>
            <person name="Song C."/>
            <person name="Cheng K."/>
            <person name="Dong M."/>
            <person name="Wang F."/>
            <person name="Huang J."/>
            <person name="Sun D."/>
            <person name="Wang L."/>
            <person name="Ye M."/>
            <person name="Zou H."/>
        </authorList>
    </citation>
    <scope>PHOSPHORYLATION [LARGE SCALE ANALYSIS] AT SER-470 AND SER-761</scope>
    <scope>IDENTIFICATION BY MASS SPECTROMETRY [LARGE SCALE ANALYSIS]</scope>
    <source>
        <tissue>Liver</tissue>
    </source>
</reference>
<reference key="11">
    <citation type="journal article" date="2002" name="Cytogenet. Genome Res.">
        <title>Search for the second Peutz-Jeghers syndrome locus: exclusion of the STK13, PRKCG, KLK10, and PSCD2 genes on chromosome 19 and the STK11IP gene on chromosome 2.</title>
        <authorList>
            <person name="Buchet-Poyau K."/>
            <person name="Mehenni H."/>
            <person name="Radhakrishna U."/>
            <person name="Antonarakis S.E."/>
        </authorList>
    </citation>
    <scope>VARIANT ILE-552</scope>
</reference>
<name>S11IP_HUMAN</name>
<keyword id="KW-0963">Cytoplasm</keyword>
<keyword id="KW-0433">Leucine-rich repeat</keyword>
<keyword id="KW-0597">Phosphoprotein</keyword>
<keyword id="KW-1267">Proteomics identification</keyword>
<keyword id="KW-1185">Reference proteome</keyword>
<keyword id="KW-0677">Repeat</keyword>
<organism>
    <name type="scientific">Homo sapiens</name>
    <name type="common">Human</name>
    <dbReference type="NCBI Taxonomy" id="9606"/>
    <lineage>
        <taxon>Eukaryota</taxon>
        <taxon>Metazoa</taxon>
        <taxon>Chordata</taxon>
        <taxon>Craniata</taxon>
        <taxon>Vertebrata</taxon>
        <taxon>Euteleostomi</taxon>
        <taxon>Mammalia</taxon>
        <taxon>Eutheria</taxon>
        <taxon>Euarchontoglires</taxon>
        <taxon>Primates</taxon>
        <taxon>Haplorrhini</taxon>
        <taxon>Catarrhini</taxon>
        <taxon>Hominidae</taxon>
        <taxon>Homo</taxon>
    </lineage>
</organism>
<accession>Q8N1F8</accession>
<accession>C9JQV3</accession>
<accession>Q8NAW9</accession>
<accession>Q8WXE4</accession>
<accession>Q96CN3</accession>
<accession>Q96PY9</accession>
<proteinExistence type="evidence at protein level"/>
<gene>
    <name type="primary">STK11IP</name>
    <name type="synonym">KIAA1898</name>
    <name type="synonym">LIP1</name>
    <name type="synonym">LKB1IP</name>
    <name type="synonym">STK11IP1</name>
</gene>
<sequence length="1088" mass="120259">MTTAQRDSLLWKLAGLLRESGDVVLSGCSTLSLLTPTLQQLNHVFELHLGPWGPGQTGFVALPSHPADSPVILQLQFLFDVLQKTLSLKLVHVAGPGPTGPIKIFPFKSLRHLELRGVPLHCLHGLRGIYSQLETLICSRSLQALEELLSACGGDFCSALPWLALLSANFSYNALTALDSSLRLLSALRFLNLSHNQVQDCQGFLMDLCELHHLDISYNRLHLVPRMGPSGAALGVLILRGNELRSLHGLEQLRNLRHLDLAYNLLEGHRELSPLWLLAELRKLYLEGNPLWFHPEHRAATAQYLSPRARDAATGFLLDGKVLSLTDFQTHTSLGLSPMGPPLPWPVGSTPETSGGPDLSDSLSSGGVVTQPLLHKVKSRVRVRRASISEPSDTDPEPRTLNPSPAGWFVQQHPELELMSSFRERFGRNWLQYRSHLEPSGNPLPATPTTSAPSAPPASSQGPDTAPRPSPPQEEARGPQESPQKMSEEVRAEPQEEEEEKEGKEEKEEGEMVEQGEEEAGEEEEEEQDQKEVEAELCRPLLVCPLEGPEGVRGRECFLRVTSAHLFEVELQAARTLERLELQSLEAAEIEPEAQAQRSPRPTGSDLLPGAPILSLRFSYICPDRQLRRYLVLEPDAHAAVQELLAVLTPVTNVAREQLGEARDLLLGRFQCLRCGHEFKPEEPRMGLDSEEGWRPLFQKTESPAVCPNCGSDHVVLLAVSRGTPNRERKQGEQSLAPSPSASPVCHPPGHGDHLDRAKNSPPQAPSTRDHGSWSLSPPPERCGLRSVDHRLRLFLDVEVFSDAQEEFQCCLKVPVALAGHTGEFMCLVVVSDRRLYLLKVTGEMREPPASWLQLTLAVPLQDLSGIELGLAGQSLRLEWAAGAGRCVLLPRDARHCRAFLEELLDVLQSLPPAWRNCVSATEEEVTPQHRLWPLLEKDSSLEARQFFYLRAFLVEGPSTCLVSLLLTPSTLFLLDEDAAGSPAEPSPPAASGEASEKVPPSGPGPAVRVREQQPLSSLSSVLLYRSAPEDLRLLFYDEVSRLESFWALRVVCQEQLTALLAWIREPWEELFSIGLRTVIQEALALDR</sequence>